<evidence type="ECO:0000255" key="1">
    <source>
        <dbReference type="HAMAP-Rule" id="MF_00113"/>
    </source>
</evidence>
<keyword id="KW-0963">Cytoplasm</keyword>
<keyword id="KW-0671">Queuosine biosynthesis</keyword>
<keyword id="KW-0949">S-adenosyl-L-methionine</keyword>
<keyword id="KW-0808">Transferase</keyword>
<name>QUEA_BRUA1</name>
<comment type="function">
    <text evidence="1">Transfers and isomerizes the ribose moiety from AdoMet to the 7-aminomethyl group of 7-deazaguanine (preQ1-tRNA) to give epoxyqueuosine (oQ-tRNA).</text>
</comment>
<comment type="catalytic activity">
    <reaction evidence="1">
        <text>7-aminomethyl-7-carbaguanosine(34) in tRNA + S-adenosyl-L-methionine = epoxyqueuosine(34) in tRNA + adenine + L-methionine + 2 H(+)</text>
        <dbReference type="Rhea" id="RHEA:32155"/>
        <dbReference type="Rhea" id="RHEA-COMP:10342"/>
        <dbReference type="Rhea" id="RHEA-COMP:18582"/>
        <dbReference type="ChEBI" id="CHEBI:15378"/>
        <dbReference type="ChEBI" id="CHEBI:16708"/>
        <dbReference type="ChEBI" id="CHEBI:57844"/>
        <dbReference type="ChEBI" id="CHEBI:59789"/>
        <dbReference type="ChEBI" id="CHEBI:82833"/>
        <dbReference type="ChEBI" id="CHEBI:194443"/>
        <dbReference type="EC" id="2.4.99.17"/>
    </reaction>
</comment>
<comment type="pathway">
    <text evidence="1">tRNA modification; tRNA-queuosine biosynthesis.</text>
</comment>
<comment type="subunit">
    <text evidence="1">Monomer.</text>
</comment>
<comment type="subcellular location">
    <subcellularLocation>
        <location evidence="1">Cytoplasm</location>
    </subcellularLocation>
</comment>
<comment type="similarity">
    <text evidence="1">Belongs to the QueA family.</text>
</comment>
<accession>B2S5U5</accession>
<dbReference type="EC" id="2.4.99.17" evidence="1"/>
<dbReference type="EMBL" id="CP000887">
    <property type="protein sequence ID" value="ACD72542.1"/>
    <property type="molecule type" value="Genomic_DNA"/>
</dbReference>
<dbReference type="RefSeq" id="WP_002964220.1">
    <property type="nucleotide sequence ID" value="NC_010742.1"/>
</dbReference>
<dbReference type="SMR" id="B2S5U5"/>
<dbReference type="GeneID" id="97533650"/>
<dbReference type="KEGG" id="bmc:BAbS19_I10350"/>
<dbReference type="HOGENOM" id="CLU_039110_1_1_5"/>
<dbReference type="UniPathway" id="UPA00392"/>
<dbReference type="Proteomes" id="UP000002565">
    <property type="component" value="Chromosome 1"/>
</dbReference>
<dbReference type="GO" id="GO:0005737">
    <property type="term" value="C:cytoplasm"/>
    <property type="evidence" value="ECO:0007669"/>
    <property type="project" value="UniProtKB-SubCell"/>
</dbReference>
<dbReference type="GO" id="GO:0051075">
    <property type="term" value="F:S-adenosylmethionine:tRNA ribosyltransferase-isomerase activity"/>
    <property type="evidence" value="ECO:0007669"/>
    <property type="project" value="UniProtKB-EC"/>
</dbReference>
<dbReference type="GO" id="GO:0008616">
    <property type="term" value="P:queuosine biosynthetic process"/>
    <property type="evidence" value="ECO:0007669"/>
    <property type="project" value="UniProtKB-UniRule"/>
</dbReference>
<dbReference type="GO" id="GO:0002099">
    <property type="term" value="P:tRNA wobble guanine modification"/>
    <property type="evidence" value="ECO:0007669"/>
    <property type="project" value="TreeGrafter"/>
</dbReference>
<dbReference type="FunFam" id="3.40.1780.10:FF:000001">
    <property type="entry name" value="S-adenosylmethionine:tRNA ribosyltransferase-isomerase"/>
    <property type="match status" value="1"/>
</dbReference>
<dbReference type="Gene3D" id="2.40.10.240">
    <property type="entry name" value="QueA-like"/>
    <property type="match status" value="1"/>
</dbReference>
<dbReference type="Gene3D" id="3.40.1780.10">
    <property type="entry name" value="QueA-like"/>
    <property type="match status" value="1"/>
</dbReference>
<dbReference type="HAMAP" id="MF_00113">
    <property type="entry name" value="QueA"/>
    <property type="match status" value="1"/>
</dbReference>
<dbReference type="InterPro" id="IPR003699">
    <property type="entry name" value="QueA"/>
</dbReference>
<dbReference type="InterPro" id="IPR042118">
    <property type="entry name" value="QueA_dom1"/>
</dbReference>
<dbReference type="InterPro" id="IPR042119">
    <property type="entry name" value="QueA_dom2"/>
</dbReference>
<dbReference type="InterPro" id="IPR036100">
    <property type="entry name" value="QueA_sf"/>
</dbReference>
<dbReference type="NCBIfam" id="NF001140">
    <property type="entry name" value="PRK00147.1"/>
    <property type="match status" value="1"/>
</dbReference>
<dbReference type="NCBIfam" id="TIGR00113">
    <property type="entry name" value="queA"/>
    <property type="match status" value="1"/>
</dbReference>
<dbReference type="PANTHER" id="PTHR30307">
    <property type="entry name" value="S-ADENOSYLMETHIONINE:TRNA RIBOSYLTRANSFERASE-ISOMERASE"/>
    <property type="match status" value="1"/>
</dbReference>
<dbReference type="PANTHER" id="PTHR30307:SF0">
    <property type="entry name" value="S-ADENOSYLMETHIONINE:TRNA RIBOSYLTRANSFERASE-ISOMERASE"/>
    <property type="match status" value="1"/>
</dbReference>
<dbReference type="Pfam" id="PF02547">
    <property type="entry name" value="Queuosine_synth"/>
    <property type="match status" value="1"/>
</dbReference>
<dbReference type="SUPFAM" id="SSF111337">
    <property type="entry name" value="QueA-like"/>
    <property type="match status" value="1"/>
</dbReference>
<proteinExistence type="inferred from homology"/>
<feature type="chain" id="PRO_1000094753" description="S-adenosylmethionine:tRNA ribosyltransferase-isomerase">
    <location>
        <begin position="1"/>
        <end position="363"/>
    </location>
</feature>
<protein>
    <recommendedName>
        <fullName evidence="1">S-adenosylmethionine:tRNA ribosyltransferase-isomerase</fullName>
        <ecNumber evidence="1">2.4.99.17</ecNumber>
    </recommendedName>
    <alternativeName>
        <fullName evidence="1">Queuosine biosynthesis protein QueA</fullName>
    </alternativeName>
</protein>
<organism>
    <name type="scientific">Brucella abortus (strain S19)</name>
    <dbReference type="NCBI Taxonomy" id="430066"/>
    <lineage>
        <taxon>Bacteria</taxon>
        <taxon>Pseudomonadati</taxon>
        <taxon>Pseudomonadota</taxon>
        <taxon>Alphaproteobacteria</taxon>
        <taxon>Hyphomicrobiales</taxon>
        <taxon>Brucellaceae</taxon>
        <taxon>Brucella/Ochrobactrum group</taxon>
        <taxon>Brucella</taxon>
    </lineage>
</organism>
<sequence>MRVDLFDFDLPEERIALRPVEPRDHAKLLHVRPGEPFEDRHVYDLPDLLQPGDALVFNDTKVIPAQLEGMRERTGNISQVSATLHMRVGPDRWKAFLRPAKRVKEGDRIRFGHSGTSCFLGTLDATVAEKGDSGEALLVFDLSGAVLDEAIAAVGHIPLPPYIASKRPEDERDRKDYQTVYAREEGAVAAPTAGLHFTPDLLEKIKARGIEEHFVTLHVGAGTFLPVKADDTGDHKMHAEIGHVSQRTASALNAVHERGGRIICVGTTSLRLIESATGEDGVVRPWSGATDIFITPGYRFRAVDLLMTNFHLPRSTLFMLVSAFSGLDTMHAAYNYAIADGYRFYSYGDASLLERIDHDRHSA</sequence>
<gene>
    <name evidence="1" type="primary">queA</name>
    <name type="ordered locus">BAbS19_I10350</name>
</gene>
<reference key="1">
    <citation type="journal article" date="2008" name="PLoS ONE">
        <title>Genome sequence of Brucella abortus vaccine strain S19 compared to virulent strains yields candidate virulence genes.</title>
        <authorList>
            <person name="Crasta O.R."/>
            <person name="Folkerts O."/>
            <person name="Fei Z."/>
            <person name="Mane S.P."/>
            <person name="Evans C."/>
            <person name="Martino-Catt S."/>
            <person name="Bricker B."/>
            <person name="Yu G."/>
            <person name="Du L."/>
            <person name="Sobral B.W."/>
        </authorList>
    </citation>
    <scope>NUCLEOTIDE SEQUENCE [LARGE SCALE GENOMIC DNA]</scope>
    <source>
        <strain>S19</strain>
    </source>
</reference>